<feature type="chain" id="PRO_0000168391" description="L-lactate dehydrogenase">
    <location>
        <begin position="1"/>
        <end position="316"/>
    </location>
</feature>
<feature type="active site" description="Proton acceptor" evidence="1">
    <location>
        <position position="178"/>
    </location>
</feature>
<feature type="binding site" evidence="1">
    <location>
        <position position="16"/>
    </location>
    <ligand>
        <name>NAD(+)</name>
        <dbReference type="ChEBI" id="CHEBI:57540"/>
    </ligand>
</feature>
<feature type="binding site" evidence="1">
    <location>
        <position position="37"/>
    </location>
    <ligand>
        <name>NAD(+)</name>
        <dbReference type="ChEBI" id="CHEBI:57540"/>
    </ligand>
</feature>
<feature type="binding site" evidence="1">
    <location>
        <position position="42"/>
    </location>
    <ligand>
        <name>NAD(+)</name>
        <dbReference type="ChEBI" id="CHEBI:57540"/>
    </ligand>
</feature>
<feature type="binding site" evidence="1">
    <location>
        <position position="68"/>
    </location>
    <ligand>
        <name>NAD(+)</name>
        <dbReference type="ChEBI" id="CHEBI:57540"/>
    </ligand>
</feature>
<feature type="binding site" evidence="1">
    <location>
        <begin position="82"/>
        <end position="83"/>
    </location>
    <ligand>
        <name>NAD(+)</name>
        <dbReference type="ChEBI" id="CHEBI:57540"/>
    </ligand>
</feature>
<feature type="binding site" evidence="1">
    <location>
        <position position="85"/>
    </location>
    <ligand>
        <name>substrate</name>
    </ligand>
</feature>
<feature type="binding site" evidence="1">
    <location>
        <position position="91"/>
    </location>
    <ligand>
        <name>substrate</name>
    </ligand>
</feature>
<feature type="binding site" evidence="1">
    <location>
        <position position="104"/>
    </location>
    <ligand>
        <name>NAD(+)</name>
        <dbReference type="ChEBI" id="CHEBI:57540"/>
    </ligand>
</feature>
<feature type="binding site" evidence="1">
    <location>
        <begin position="121"/>
        <end position="123"/>
    </location>
    <ligand>
        <name>NAD(+)</name>
        <dbReference type="ChEBI" id="CHEBI:57540"/>
    </ligand>
</feature>
<feature type="binding site" evidence="1">
    <location>
        <begin position="123"/>
        <end position="126"/>
    </location>
    <ligand>
        <name>substrate</name>
    </ligand>
</feature>
<feature type="binding site" evidence="1">
    <location>
        <position position="146"/>
    </location>
    <ligand>
        <name>NAD(+)</name>
        <dbReference type="ChEBI" id="CHEBI:57540"/>
    </ligand>
</feature>
<feature type="binding site" evidence="1">
    <location>
        <begin position="151"/>
        <end position="154"/>
    </location>
    <ligand>
        <name>substrate</name>
    </ligand>
</feature>
<feature type="binding site" evidence="1">
    <location>
        <position position="156"/>
    </location>
    <ligand>
        <name>beta-D-fructose 1,6-bisphosphate</name>
        <dbReference type="ChEBI" id="CHEBI:32966"/>
        <note>allosteric activator</note>
    </ligand>
</feature>
<feature type="binding site" evidence="1">
    <location>
        <position position="171"/>
    </location>
    <ligand>
        <name>beta-D-fructose 1,6-bisphosphate</name>
        <dbReference type="ChEBI" id="CHEBI:32966"/>
        <note>allosteric activator</note>
    </ligand>
</feature>
<feature type="binding site" evidence="1">
    <location>
        <position position="231"/>
    </location>
    <ligand>
        <name>substrate</name>
    </ligand>
</feature>
<feature type="modified residue" description="Phosphotyrosine" evidence="1">
    <location>
        <position position="222"/>
    </location>
</feature>
<sequence length="316" mass="34102">MKKFGKKVVLVGDGSVGSSYAFAMVTQGIADEFVIIDIAKDKVEADVKDLNHGALYSSSPVTVKAGEYEDCKDADLVVITAGAPQKPGETRLQLVEKNTKIMKSIVTSVMDSGFDGFFLIAANPVDILTRYVKEVTGLPAERVIGSGTVLDSARFRYLISKELGVTSSSVHASIIGEHGDSELAVWSQANVGGISVYDTLKEETGSDAKANEIYINTRDAAYDIIQAKGSTYYGIALALLRISKALLNNENSILTVSSQLNGQYGFNDVYLGLPTLINQNGAVKIYETPLNDNELQLLEKSVKTLEDTYDSIKHLV</sequence>
<proteinExistence type="inferred from homology"/>
<reference key="1">
    <citation type="journal article" date="2003" name="Mol. Microbiol.">
        <title>Genome-based analysis of virulence genes in a non-biofilm-forming Staphylococcus epidermidis strain (ATCC 12228).</title>
        <authorList>
            <person name="Zhang Y.-Q."/>
            <person name="Ren S.-X."/>
            <person name="Li H.-L."/>
            <person name="Wang Y.-X."/>
            <person name="Fu G."/>
            <person name="Yang J."/>
            <person name="Qin Z.-Q."/>
            <person name="Miao Y.-G."/>
            <person name="Wang W.-Y."/>
            <person name="Chen R.-S."/>
            <person name="Shen Y."/>
            <person name="Chen Z."/>
            <person name="Yuan Z.-H."/>
            <person name="Zhao G.-P."/>
            <person name="Qu D."/>
            <person name="Danchin A."/>
            <person name="Wen Y.-M."/>
        </authorList>
    </citation>
    <scope>NUCLEOTIDE SEQUENCE [LARGE SCALE GENOMIC DNA]</scope>
    <source>
        <strain>ATCC 12228 / FDA PCI 1200</strain>
    </source>
</reference>
<organism>
    <name type="scientific">Staphylococcus epidermidis (strain ATCC 12228 / FDA PCI 1200)</name>
    <dbReference type="NCBI Taxonomy" id="176280"/>
    <lineage>
        <taxon>Bacteria</taxon>
        <taxon>Bacillati</taxon>
        <taxon>Bacillota</taxon>
        <taxon>Bacilli</taxon>
        <taxon>Bacillales</taxon>
        <taxon>Staphylococcaceae</taxon>
        <taxon>Staphylococcus</taxon>
    </lineage>
</organism>
<comment type="function">
    <text evidence="1">Catalyzes the conversion of lactate to pyruvate.</text>
</comment>
<comment type="catalytic activity">
    <reaction evidence="1">
        <text>(S)-lactate + NAD(+) = pyruvate + NADH + H(+)</text>
        <dbReference type="Rhea" id="RHEA:23444"/>
        <dbReference type="ChEBI" id="CHEBI:15361"/>
        <dbReference type="ChEBI" id="CHEBI:15378"/>
        <dbReference type="ChEBI" id="CHEBI:16651"/>
        <dbReference type="ChEBI" id="CHEBI:57540"/>
        <dbReference type="ChEBI" id="CHEBI:57945"/>
        <dbReference type="EC" id="1.1.1.27"/>
    </reaction>
</comment>
<comment type="activity regulation">
    <text evidence="1">Allosterically activated by fructose 1,6-bisphosphate (FBP).</text>
</comment>
<comment type="pathway">
    <text evidence="1">Fermentation; pyruvate fermentation to lactate; (S)-lactate from pyruvate: step 1/1.</text>
</comment>
<comment type="subunit">
    <text evidence="1">Homotetramer.</text>
</comment>
<comment type="subcellular location">
    <subcellularLocation>
        <location evidence="1">Cytoplasm</location>
    </subcellularLocation>
</comment>
<comment type="similarity">
    <text evidence="1">Belongs to the LDH/MDH superfamily. LDH family.</text>
</comment>
<accession>Q8CMZ0</accession>
<name>LDH_STAES</name>
<gene>
    <name evidence="1" type="primary">ldh</name>
    <name type="ordered locus">SE_2145</name>
</gene>
<dbReference type="EC" id="1.1.1.27" evidence="1"/>
<dbReference type="EMBL" id="AE015929">
    <property type="protein sequence ID" value="AAO05787.1"/>
    <property type="molecule type" value="Genomic_DNA"/>
</dbReference>
<dbReference type="RefSeq" id="NP_765700.1">
    <property type="nucleotide sequence ID" value="NC_004461.1"/>
</dbReference>
<dbReference type="RefSeq" id="WP_001830650.1">
    <property type="nucleotide sequence ID" value="NZ_WBME01000005.1"/>
</dbReference>
<dbReference type="SMR" id="Q8CMZ0"/>
<dbReference type="KEGG" id="sep:SE_2145"/>
<dbReference type="PATRIC" id="fig|176280.10.peg.2097"/>
<dbReference type="eggNOG" id="COG0039">
    <property type="taxonomic scope" value="Bacteria"/>
</dbReference>
<dbReference type="HOGENOM" id="CLU_045401_1_1_9"/>
<dbReference type="OrthoDB" id="9802969at2"/>
<dbReference type="BRENDA" id="1.1.1.27">
    <property type="organism ID" value="5875"/>
</dbReference>
<dbReference type="UniPathway" id="UPA00554">
    <property type="reaction ID" value="UER00611"/>
</dbReference>
<dbReference type="Proteomes" id="UP000001411">
    <property type="component" value="Chromosome"/>
</dbReference>
<dbReference type="GO" id="GO:0005737">
    <property type="term" value="C:cytoplasm"/>
    <property type="evidence" value="ECO:0007669"/>
    <property type="project" value="UniProtKB-SubCell"/>
</dbReference>
<dbReference type="GO" id="GO:0004459">
    <property type="term" value="F:L-lactate dehydrogenase activity"/>
    <property type="evidence" value="ECO:0007669"/>
    <property type="project" value="UniProtKB-UniRule"/>
</dbReference>
<dbReference type="GO" id="GO:0006096">
    <property type="term" value="P:glycolytic process"/>
    <property type="evidence" value="ECO:0007669"/>
    <property type="project" value="UniProtKB-UniRule"/>
</dbReference>
<dbReference type="GO" id="GO:0006089">
    <property type="term" value="P:lactate metabolic process"/>
    <property type="evidence" value="ECO:0007669"/>
    <property type="project" value="TreeGrafter"/>
</dbReference>
<dbReference type="CDD" id="cd05291">
    <property type="entry name" value="HicDH_like"/>
    <property type="match status" value="1"/>
</dbReference>
<dbReference type="FunFam" id="3.40.50.720:FF:000018">
    <property type="entry name" value="Malate dehydrogenase"/>
    <property type="match status" value="1"/>
</dbReference>
<dbReference type="Gene3D" id="3.90.110.10">
    <property type="entry name" value="Lactate dehydrogenase/glycoside hydrolase, family 4, C-terminal"/>
    <property type="match status" value="1"/>
</dbReference>
<dbReference type="Gene3D" id="3.40.50.720">
    <property type="entry name" value="NAD(P)-binding Rossmann-like Domain"/>
    <property type="match status" value="1"/>
</dbReference>
<dbReference type="HAMAP" id="MF_00488">
    <property type="entry name" value="Lactate_dehydrog"/>
    <property type="match status" value="1"/>
</dbReference>
<dbReference type="InterPro" id="IPR001557">
    <property type="entry name" value="L-lactate/malate_DH"/>
</dbReference>
<dbReference type="InterPro" id="IPR011304">
    <property type="entry name" value="L-lactate_DH"/>
</dbReference>
<dbReference type="InterPro" id="IPR018177">
    <property type="entry name" value="L-lactate_DH_AS"/>
</dbReference>
<dbReference type="InterPro" id="IPR022383">
    <property type="entry name" value="Lactate/malate_DH_C"/>
</dbReference>
<dbReference type="InterPro" id="IPR001236">
    <property type="entry name" value="Lactate/malate_DH_N"/>
</dbReference>
<dbReference type="InterPro" id="IPR015955">
    <property type="entry name" value="Lactate_DH/Glyco_Ohase_4_C"/>
</dbReference>
<dbReference type="InterPro" id="IPR036291">
    <property type="entry name" value="NAD(P)-bd_dom_sf"/>
</dbReference>
<dbReference type="NCBIfam" id="TIGR01771">
    <property type="entry name" value="L-LDH-NAD"/>
    <property type="match status" value="1"/>
</dbReference>
<dbReference type="NCBIfam" id="NF000824">
    <property type="entry name" value="PRK00066.1"/>
    <property type="match status" value="1"/>
</dbReference>
<dbReference type="PANTHER" id="PTHR43128">
    <property type="entry name" value="L-2-HYDROXYCARBOXYLATE DEHYDROGENASE (NAD(P)(+))"/>
    <property type="match status" value="1"/>
</dbReference>
<dbReference type="PANTHER" id="PTHR43128:SF16">
    <property type="entry name" value="L-LACTATE DEHYDROGENASE"/>
    <property type="match status" value="1"/>
</dbReference>
<dbReference type="Pfam" id="PF02866">
    <property type="entry name" value="Ldh_1_C"/>
    <property type="match status" value="1"/>
</dbReference>
<dbReference type="Pfam" id="PF00056">
    <property type="entry name" value="Ldh_1_N"/>
    <property type="match status" value="1"/>
</dbReference>
<dbReference type="PIRSF" id="PIRSF000102">
    <property type="entry name" value="Lac_mal_DH"/>
    <property type="match status" value="1"/>
</dbReference>
<dbReference type="PRINTS" id="PR00086">
    <property type="entry name" value="LLDHDRGNASE"/>
</dbReference>
<dbReference type="SUPFAM" id="SSF56327">
    <property type="entry name" value="LDH C-terminal domain-like"/>
    <property type="match status" value="1"/>
</dbReference>
<dbReference type="SUPFAM" id="SSF51735">
    <property type="entry name" value="NAD(P)-binding Rossmann-fold domains"/>
    <property type="match status" value="1"/>
</dbReference>
<dbReference type="PROSITE" id="PS00064">
    <property type="entry name" value="L_LDH"/>
    <property type="match status" value="1"/>
</dbReference>
<keyword id="KW-0021">Allosteric enzyme</keyword>
<keyword id="KW-0963">Cytoplasm</keyword>
<keyword id="KW-0520">NAD</keyword>
<keyword id="KW-0560">Oxidoreductase</keyword>
<keyword id="KW-0597">Phosphoprotein</keyword>
<protein>
    <recommendedName>
        <fullName evidence="1">L-lactate dehydrogenase</fullName>
        <shortName evidence="1">L-LDH</shortName>
        <ecNumber evidence="1">1.1.1.27</ecNumber>
    </recommendedName>
</protein>
<evidence type="ECO:0000255" key="1">
    <source>
        <dbReference type="HAMAP-Rule" id="MF_00488"/>
    </source>
</evidence>